<name>SPP2_NEUCR</name>
<proteinExistence type="inferred from homology"/>
<comment type="function">
    <text evidence="1">Involved in spliceosome maturation and the first step of pre-mRNA splicing.</text>
</comment>
<comment type="subunit">
    <text evidence="1">Associated with the spliceosome.</text>
</comment>
<comment type="subcellular location">
    <subcellularLocation>
        <location evidence="1">Nucleus</location>
    </subcellularLocation>
</comment>
<comment type="similarity">
    <text evidence="3">Belongs to the SPP2 family.</text>
</comment>
<protein>
    <recommendedName>
        <fullName>Pre-mRNA-splicing factor spp2</fullName>
    </recommendedName>
    <alternativeName>
        <fullName>mRNA-splicing protein 40</fullName>
    </alternativeName>
</protein>
<sequence>MTDQDSKPRVTIALGTSSSSSSFKTKKPSRPTHTRRHHARASSNHYSSESEDDDDETGGQRTGRVQAITEISTYGDDNELENRDRSDRRRDRSRDRDRDRNRDGDRNRDRRRDNRSQDRDRHNNRSSRPSRDDDASRSRRRSTSRSRDRDHKPKDPKDLQEPETAPPKWGLTINPKSTTTATSSFHHQRQPRSPSPEEKPPQTLEEQALSSLLSLDNKGSSTASKRKRSHSPSSHDRDRSPDHSDYRAVPIDDFGATLLKQFGWDGKMRGKVKEVTHKHANLAGLGAKDAKGAEELDAWNQKISGRGGGDSRGRDSRPVRLEDYRREENKKKQRMEYRHGESSYKQERERERERRGDR</sequence>
<dbReference type="EMBL" id="CM002238">
    <property type="protein sequence ID" value="ESA43151.1"/>
    <property type="molecule type" value="Genomic_DNA"/>
</dbReference>
<dbReference type="EMBL" id="CM002238">
    <property type="protein sequence ID" value="ESA43152.1"/>
    <property type="molecule type" value="Genomic_DNA"/>
</dbReference>
<dbReference type="RefSeq" id="XP_011393951.1">
    <property type="nucleotide sequence ID" value="XM_011395649.1"/>
</dbReference>
<dbReference type="RefSeq" id="XP_011393952.1">
    <property type="nucleotide sequence ID" value="XM_011395650.1"/>
</dbReference>
<dbReference type="SMR" id="Q7SBU7"/>
<dbReference type="STRING" id="367110.Q7SBU7"/>
<dbReference type="PaxDb" id="5141-EFNCRP00000007487"/>
<dbReference type="EnsemblFungi" id="ESA43151">
    <property type="protein sequence ID" value="ESA43151"/>
    <property type="gene ID" value="NCU07862"/>
</dbReference>
<dbReference type="EnsemblFungi" id="ESA43152">
    <property type="protein sequence ID" value="ESA43152"/>
    <property type="gene ID" value="NCU07862"/>
</dbReference>
<dbReference type="GeneID" id="3879262"/>
<dbReference type="KEGG" id="ncr:NCU07862"/>
<dbReference type="VEuPathDB" id="FungiDB:NCU07862"/>
<dbReference type="HOGENOM" id="CLU_047291_1_0_1"/>
<dbReference type="InParanoid" id="Q7SBU7"/>
<dbReference type="OMA" id="AWGKSAM"/>
<dbReference type="OrthoDB" id="5577072at2759"/>
<dbReference type="Proteomes" id="UP000001805">
    <property type="component" value="Chromosome 3, Linkage Group III"/>
</dbReference>
<dbReference type="GO" id="GO:0005681">
    <property type="term" value="C:spliceosomal complex"/>
    <property type="evidence" value="ECO:0007669"/>
    <property type="project" value="UniProtKB-KW"/>
</dbReference>
<dbReference type="GO" id="GO:0006397">
    <property type="term" value="P:mRNA processing"/>
    <property type="evidence" value="ECO:0007669"/>
    <property type="project" value="UniProtKB-KW"/>
</dbReference>
<dbReference type="GO" id="GO:0008380">
    <property type="term" value="P:RNA splicing"/>
    <property type="evidence" value="ECO:0007669"/>
    <property type="project" value="UniProtKB-KW"/>
</dbReference>
<dbReference type="InterPro" id="IPR026822">
    <property type="entry name" value="Spp2/MOS2_G-patch"/>
</dbReference>
<dbReference type="Pfam" id="PF12656">
    <property type="entry name" value="G-patch_2"/>
    <property type="match status" value="1"/>
</dbReference>
<reference key="1">
    <citation type="journal article" date="2003" name="Nature">
        <title>The genome sequence of the filamentous fungus Neurospora crassa.</title>
        <authorList>
            <person name="Galagan J.E."/>
            <person name="Calvo S.E."/>
            <person name="Borkovich K.A."/>
            <person name="Selker E.U."/>
            <person name="Read N.D."/>
            <person name="Jaffe D.B."/>
            <person name="FitzHugh W."/>
            <person name="Ma L.-J."/>
            <person name="Smirnov S."/>
            <person name="Purcell S."/>
            <person name="Rehman B."/>
            <person name="Elkins T."/>
            <person name="Engels R."/>
            <person name="Wang S."/>
            <person name="Nielsen C.B."/>
            <person name="Butler J."/>
            <person name="Endrizzi M."/>
            <person name="Qui D."/>
            <person name="Ianakiev P."/>
            <person name="Bell-Pedersen D."/>
            <person name="Nelson M.A."/>
            <person name="Werner-Washburne M."/>
            <person name="Selitrennikoff C.P."/>
            <person name="Kinsey J.A."/>
            <person name="Braun E.L."/>
            <person name="Zelter A."/>
            <person name="Schulte U."/>
            <person name="Kothe G.O."/>
            <person name="Jedd G."/>
            <person name="Mewes H.-W."/>
            <person name="Staben C."/>
            <person name="Marcotte E."/>
            <person name="Greenberg D."/>
            <person name="Roy A."/>
            <person name="Foley K."/>
            <person name="Naylor J."/>
            <person name="Stange-Thomann N."/>
            <person name="Barrett R."/>
            <person name="Gnerre S."/>
            <person name="Kamal M."/>
            <person name="Kamvysselis M."/>
            <person name="Mauceli E.W."/>
            <person name="Bielke C."/>
            <person name="Rudd S."/>
            <person name="Frishman D."/>
            <person name="Krystofova S."/>
            <person name="Rasmussen C."/>
            <person name="Metzenberg R.L."/>
            <person name="Perkins D.D."/>
            <person name="Kroken S."/>
            <person name="Cogoni C."/>
            <person name="Macino G."/>
            <person name="Catcheside D.E.A."/>
            <person name="Li W."/>
            <person name="Pratt R.J."/>
            <person name="Osmani S.A."/>
            <person name="DeSouza C.P.C."/>
            <person name="Glass N.L."/>
            <person name="Orbach M.J."/>
            <person name="Berglund J.A."/>
            <person name="Voelker R."/>
            <person name="Yarden O."/>
            <person name="Plamann M."/>
            <person name="Seiler S."/>
            <person name="Dunlap J.C."/>
            <person name="Radford A."/>
            <person name="Aramayo R."/>
            <person name="Natvig D.O."/>
            <person name="Alex L.A."/>
            <person name="Mannhaupt G."/>
            <person name="Ebbole D.J."/>
            <person name="Freitag M."/>
            <person name="Paulsen I."/>
            <person name="Sachs M.S."/>
            <person name="Lander E.S."/>
            <person name="Nusbaum C."/>
            <person name="Birren B.W."/>
        </authorList>
    </citation>
    <scope>NUCLEOTIDE SEQUENCE [LARGE SCALE GENOMIC DNA]</scope>
    <source>
        <strain>ATCC 24698 / 74-OR23-1A / CBS 708.71 / DSM 1257 / FGSC 987</strain>
    </source>
</reference>
<feature type="chain" id="PRO_0000218526" description="Pre-mRNA-splicing factor spp2">
    <location>
        <begin position="1"/>
        <end position="358"/>
    </location>
</feature>
<feature type="region of interest" description="Disordered" evidence="2">
    <location>
        <begin position="1"/>
        <end position="250"/>
    </location>
</feature>
<feature type="region of interest" description="Disordered" evidence="2">
    <location>
        <begin position="298"/>
        <end position="358"/>
    </location>
</feature>
<feature type="compositionally biased region" description="Basic residues" evidence="2">
    <location>
        <begin position="24"/>
        <end position="40"/>
    </location>
</feature>
<feature type="compositionally biased region" description="Basic and acidic residues" evidence="2">
    <location>
        <begin position="80"/>
        <end position="137"/>
    </location>
</feature>
<feature type="compositionally biased region" description="Basic and acidic residues" evidence="2">
    <location>
        <begin position="145"/>
        <end position="160"/>
    </location>
</feature>
<feature type="compositionally biased region" description="Polar residues" evidence="2">
    <location>
        <begin position="174"/>
        <end position="185"/>
    </location>
</feature>
<feature type="compositionally biased region" description="Basic and acidic residues" evidence="2">
    <location>
        <begin position="233"/>
        <end position="246"/>
    </location>
</feature>
<feature type="compositionally biased region" description="Basic and acidic residues" evidence="2">
    <location>
        <begin position="309"/>
        <end position="358"/>
    </location>
</feature>
<gene>
    <name type="primary">msp-40</name>
    <name type="synonym">spp2</name>
    <name type="ORF">NCU07862</name>
</gene>
<organism>
    <name type="scientific">Neurospora crassa (strain ATCC 24698 / 74-OR23-1A / CBS 708.71 / DSM 1257 / FGSC 987)</name>
    <dbReference type="NCBI Taxonomy" id="367110"/>
    <lineage>
        <taxon>Eukaryota</taxon>
        <taxon>Fungi</taxon>
        <taxon>Dikarya</taxon>
        <taxon>Ascomycota</taxon>
        <taxon>Pezizomycotina</taxon>
        <taxon>Sordariomycetes</taxon>
        <taxon>Sordariomycetidae</taxon>
        <taxon>Sordariales</taxon>
        <taxon>Sordariaceae</taxon>
        <taxon>Neurospora</taxon>
    </lineage>
</organism>
<accession>Q7SBU7</accession>
<accession>U9W2Q2</accession>
<evidence type="ECO:0000250" key="1"/>
<evidence type="ECO:0000256" key="2">
    <source>
        <dbReference type="SAM" id="MobiDB-lite"/>
    </source>
</evidence>
<evidence type="ECO:0000305" key="3"/>
<keyword id="KW-0507">mRNA processing</keyword>
<keyword id="KW-0508">mRNA splicing</keyword>
<keyword id="KW-0539">Nucleus</keyword>
<keyword id="KW-1185">Reference proteome</keyword>
<keyword id="KW-0747">Spliceosome</keyword>